<dbReference type="EMBL" id="U27184">
    <property type="protein sequence ID" value="AAC44040.1"/>
    <property type="molecule type" value="Genomic_DNA"/>
</dbReference>
<dbReference type="BMRB" id="P58997"/>
<dbReference type="SMR" id="P58997"/>
<dbReference type="iPTMnet" id="P58997"/>
<dbReference type="GO" id="GO:0016020">
    <property type="term" value="C:membrane"/>
    <property type="evidence" value="ECO:0007669"/>
    <property type="project" value="UniProtKB-SubCell"/>
</dbReference>
<dbReference type="GO" id="GO:0009289">
    <property type="term" value="C:pilus"/>
    <property type="evidence" value="ECO:0007669"/>
    <property type="project" value="UniProtKB-SubCell"/>
</dbReference>
<dbReference type="Gene3D" id="3.30.1690.10">
    <property type="entry name" value="TcpA-like pilin"/>
    <property type="match status" value="1"/>
</dbReference>
<dbReference type="InterPro" id="IPR007971">
    <property type="entry name" value="Bundlin"/>
</dbReference>
<dbReference type="InterPro" id="IPR012902">
    <property type="entry name" value="N_methyl_site"/>
</dbReference>
<dbReference type="InterPro" id="IPR045584">
    <property type="entry name" value="Pilin-like"/>
</dbReference>
<dbReference type="Pfam" id="PF05307">
    <property type="entry name" value="Bundlin"/>
    <property type="match status" value="1"/>
</dbReference>
<dbReference type="SUPFAM" id="SSF54523">
    <property type="entry name" value="Pili subunits"/>
    <property type="match status" value="1"/>
</dbReference>
<dbReference type="PROSITE" id="PS00409">
    <property type="entry name" value="PROKAR_NTER_METHYL"/>
    <property type="match status" value="1"/>
</dbReference>
<comment type="function">
    <text>Major repeating bundle-forming pilus (BFP) subunit. Is required for EPEC localized adherence.</text>
</comment>
<comment type="subunit">
    <text>10 to 100 laterally aligned filaments or bundle-forming pili coalesce into rope-like bundles. These form linkages between the bacteria within the enteropathogenic E.coli (EPEC) microcolonies that are attached to epithelial cells.</text>
</comment>
<comment type="subcellular location">
    <subcellularLocation>
        <location>Fimbrium</location>
    </subcellularLocation>
    <subcellularLocation>
        <location evidence="1">Membrane</location>
        <topology evidence="1">Single-pass membrane protein</topology>
    </subcellularLocation>
</comment>
<comment type="similarity">
    <text evidence="4">Belongs to the N-Me-Phe pilin family.</text>
</comment>
<comment type="sequence caution" evidence="5">
    <conflict type="miscellaneous discrepancy" ref="2"/>
    <text>The modified residue is misidentified as methionine.</text>
</comment>
<feature type="propeptide" id="PRO_0000024194" evidence="2 3">
    <location>
        <begin position="1"/>
        <end position="13"/>
    </location>
</feature>
<feature type="chain" id="PRO_0000024195" description="Major structural subunit of bundle-forming pilus">
    <location>
        <begin position="14"/>
        <end position="193"/>
    </location>
</feature>
<feature type="transmembrane region" description="Helical" evidence="4">
    <location>
        <begin position="14"/>
        <end position="35"/>
    </location>
</feature>
<feature type="modified residue" description="N-methylleucine" evidence="2 3">
    <location>
        <position position="14"/>
    </location>
</feature>
<feature type="disulfide bond" evidence="1">
    <location>
        <begin position="129"/>
        <end position="179"/>
    </location>
</feature>
<feature type="sequence conflict" description="In Ref. 2; AA sequence." evidence="5" ref="2">
    <original>L</original>
    <variation>M</variation>
    <location>
        <position position="14"/>
    </location>
</feature>
<feature type="sequence conflict" description="In Ref. 2; AA sequence." evidence="5" ref="2">
    <original>S</original>
    <variation>I</variation>
    <location>
        <position position="41"/>
    </location>
</feature>
<keyword id="KW-0903">Direct protein sequencing</keyword>
<keyword id="KW-1015">Disulfide bond</keyword>
<keyword id="KW-0281">Fimbrium</keyword>
<keyword id="KW-0472">Membrane</keyword>
<keyword id="KW-0488">Methylation</keyword>
<keyword id="KW-0614">Plasmid</keyword>
<keyword id="KW-0812">Transmembrane</keyword>
<keyword id="KW-1133">Transmembrane helix</keyword>
<accession>P58997</accession>
<proteinExistence type="evidence at protein level"/>
<reference key="1">
    <citation type="journal article" date="1993" name="Mol. Microbiol.">
        <title>Cloning and characterization of the bundle-forming pilin gene of enteropathogenic Escherichia coli and its distribution in Salmonella serotypes.</title>
        <authorList>
            <person name="Sohel I."/>
            <person name="Puente J.L."/>
            <person name="Murray W.J."/>
            <person name="Vuopio-Varkila J."/>
            <person name="Schoolnik G.K."/>
        </authorList>
    </citation>
    <scope>NUCLEOTIDE SEQUENCE [GENOMIC DNA]</scope>
    <source>
        <strain>O111:H- / B171 / EPEC</strain>
    </source>
</reference>
<reference key="2">
    <citation type="journal article" date="1991" name="Science">
        <title>An inducible bundle-forming pilus of enteropathogenic Escherichia coli.</title>
        <authorList>
            <person name="Giron J.A."/>
            <person name="Ho A.S.Y."/>
            <person name="Schoolnik G.K."/>
        </authorList>
    </citation>
    <scope>PROTEIN SEQUENCE OF 14-41</scope>
    <scope>METHYLATION AT LEU-14</scope>
    <source>
        <strain>O111:H- / B171 / EPEC</strain>
    </source>
</reference>
<protein>
    <recommendedName>
        <fullName>Major structural subunit of bundle-forming pilus</fullName>
    </recommendedName>
    <alternativeName>
        <fullName>Bundle-forming pilin</fullName>
        <shortName>Bundlin</shortName>
    </alternativeName>
</protein>
<evidence type="ECO:0000255" key="1"/>
<evidence type="ECO:0000255" key="2">
    <source>
        <dbReference type="PROSITE-ProRule" id="PRU01070"/>
    </source>
</evidence>
<evidence type="ECO:0000269" key="3">
    <source>
    </source>
</evidence>
<evidence type="ECO:0000305" key="4"/>
<evidence type="ECO:0000305" key="5">
    <source>
    </source>
</evidence>
<gene>
    <name type="primary">bfpA</name>
</gene>
<name>BFPA_ECO11</name>
<geneLocation type="plasmid">
    <name>pB171</name>
</geneLocation>
<organism>
    <name type="scientific">Escherichia coli O111:H-</name>
    <dbReference type="NCBI Taxonomy" id="168927"/>
    <lineage>
        <taxon>Bacteria</taxon>
        <taxon>Pseudomonadati</taxon>
        <taxon>Pseudomonadota</taxon>
        <taxon>Gammaproteobacteria</taxon>
        <taxon>Enterobacterales</taxon>
        <taxon>Enterobacteriaceae</taxon>
        <taxon>Escherichia</taxon>
    </lineage>
</organism>
<sequence length="193" mass="20300">MVSKIMNKKYEKGLSLIESAMVLALAATVTAGVMFYYQSASDSNKSQNAISEVMSATSAINGLYIGQTSYSGLDSTILLNTSAIPDNYKDTTNKKITNPFGGELNVGPANNNTAFGYYLTLTRLDKAACVSLATLNLGTSAKGYGVNISSENNITSFGNSADQAAKSTAITPAEAATACKNTDSTNKVTYFMK</sequence>